<accession>P0DSG8</accession>
<accession>A0A7H2C796</accession>
<comment type="induction">
    <text evidence="1">Expressed in exponential and stationary phase in rich medium; expression is a bit higher in stationary phase (at protein level).</text>
</comment>
<evidence type="ECO:0000269" key="1">
    <source>
    </source>
</evidence>
<evidence type="ECO:0000303" key="2">
    <source>
    </source>
</evidence>
<evidence type="ECO:0000312" key="3">
    <source>
        <dbReference type="EMBL" id="QNV50543.1"/>
    </source>
</evidence>
<proteinExistence type="evidence at protein level"/>
<reference key="1">
    <citation type="journal article" date="1997" name="Science">
        <title>The complete genome sequence of Escherichia coli K-12.</title>
        <authorList>
            <person name="Blattner F.R."/>
            <person name="Plunkett G. III"/>
            <person name="Bloch C.A."/>
            <person name="Perna N.T."/>
            <person name="Burland V."/>
            <person name="Riley M."/>
            <person name="Collado-Vides J."/>
            <person name="Glasner J.D."/>
            <person name="Rode C.K."/>
            <person name="Mayhew G.F."/>
            <person name="Gregor J."/>
            <person name="Davis N.W."/>
            <person name="Kirkpatrick H.A."/>
            <person name="Goeden M.A."/>
            <person name="Rose D.J."/>
            <person name="Mau B."/>
            <person name="Shao Y."/>
        </authorList>
    </citation>
    <scope>NUCLEOTIDE SEQUENCE [LARGE SCALE GENOMIC DNA]</scope>
    <source>
        <strain>K12 / MG1655 / ATCC 47076</strain>
    </source>
</reference>
<reference key="2">
    <citation type="journal article" date="2019" name="MBio">
        <title>Identifying small proteins by ribosome profiling with stalled initiation complexes.</title>
        <authorList>
            <person name="Weaver J."/>
            <person name="Mohammad F."/>
            <person name="Buskirk A.R."/>
            <person name="Storz G."/>
        </authorList>
    </citation>
    <scope>IDENTIFICATION</scope>
    <scope>INDUCTION</scope>
    <source>
        <strain>K12 / MG1655 / ATCC 47076</strain>
    </source>
</reference>
<protein>
    <recommendedName>
        <fullName evidence="2">Protein YhiY</fullName>
    </recommendedName>
</protein>
<organism>
    <name type="scientific">Escherichia coli (strain K12)</name>
    <dbReference type="NCBI Taxonomy" id="83333"/>
    <lineage>
        <taxon>Bacteria</taxon>
        <taxon>Pseudomonadati</taxon>
        <taxon>Pseudomonadota</taxon>
        <taxon>Gammaproteobacteria</taxon>
        <taxon>Enterobacterales</taxon>
        <taxon>Enterobacteriaceae</taxon>
        <taxon>Escherichia</taxon>
    </lineage>
</organism>
<feature type="chain" id="PRO_0000447150" description="Protein YhiY">
    <location>
        <begin position="1"/>
        <end position="37"/>
    </location>
</feature>
<keyword id="KW-1185">Reference proteome</keyword>
<gene>
    <name evidence="2" type="primary">yhiY</name>
    <name evidence="3" type="ordered locus">b4790</name>
</gene>
<dbReference type="EMBL" id="U00096">
    <property type="protein sequence ID" value="QNV50543.1"/>
    <property type="molecule type" value="Genomic_DNA"/>
</dbReference>
<dbReference type="InParanoid" id="P0DSG8"/>
<dbReference type="BioCyc" id="EcoCyc:MONOMER0-4502"/>
<dbReference type="Proteomes" id="UP000000625">
    <property type="component" value="Chromosome"/>
</dbReference>
<dbReference type="Pfam" id="PF23514">
    <property type="entry name" value="YhiY"/>
    <property type="match status" value="1"/>
</dbReference>
<name>YHIY_ECOLI</name>
<sequence length="37" mass="4153">MMTTLLPVFTKPSPLALNALRAGRICRFLLIPDGRIR</sequence>